<name>SYE2_BART1</name>
<dbReference type="EC" id="6.1.1.17" evidence="1"/>
<dbReference type="EMBL" id="AM260525">
    <property type="protein sequence ID" value="CAK01335.1"/>
    <property type="molecule type" value="Genomic_DNA"/>
</dbReference>
<dbReference type="RefSeq" id="WP_012231536.1">
    <property type="nucleotide sequence ID" value="NC_010161.1"/>
</dbReference>
<dbReference type="SMR" id="A9ISS8"/>
<dbReference type="KEGG" id="btr:BT_0938"/>
<dbReference type="eggNOG" id="COG0008">
    <property type="taxonomic scope" value="Bacteria"/>
</dbReference>
<dbReference type="eggNOG" id="COG1384">
    <property type="taxonomic scope" value="Bacteria"/>
</dbReference>
<dbReference type="HOGENOM" id="CLU_015768_6_1_5"/>
<dbReference type="Proteomes" id="UP000001592">
    <property type="component" value="Chromosome"/>
</dbReference>
<dbReference type="GO" id="GO:0005737">
    <property type="term" value="C:cytoplasm"/>
    <property type="evidence" value="ECO:0007669"/>
    <property type="project" value="UniProtKB-SubCell"/>
</dbReference>
<dbReference type="GO" id="GO:0005524">
    <property type="term" value="F:ATP binding"/>
    <property type="evidence" value="ECO:0007669"/>
    <property type="project" value="UniProtKB-UniRule"/>
</dbReference>
<dbReference type="GO" id="GO:0004818">
    <property type="term" value="F:glutamate-tRNA ligase activity"/>
    <property type="evidence" value="ECO:0007669"/>
    <property type="project" value="UniProtKB-UniRule"/>
</dbReference>
<dbReference type="GO" id="GO:0000049">
    <property type="term" value="F:tRNA binding"/>
    <property type="evidence" value="ECO:0007669"/>
    <property type="project" value="InterPro"/>
</dbReference>
<dbReference type="GO" id="GO:0006424">
    <property type="term" value="P:glutamyl-tRNA aminoacylation"/>
    <property type="evidence" value="ECO:0007669"/>
    <property type="project" value="UniProtKB-UniRule"/>
</dbReference>
<dbReference type="Gene3D" id="1.10.10.350">
    <property type="match status" value="1"/>
</dbReference>
<dbReference type="Gene3D" id="3.40.50.620">
    <property type="entry name" value="HUPs"/>
    <property type="match status" value="1"/>
</dbReference>
<dbReference type="HAMAP" id="MF_00022">
    <property type="entry name" value="Glu_tRNA_synth_type1"/>
    <property type="match status" value="1"/>
</dbReference>
<dbReference type="InterPro" id="IPR045462">
    <property type="entry name" value="aa-tRNA-synth_I_cd-bd"/>
</dbReference>
<dbReference type="InterPro" id="IPR020751">
    <property type="entry name" value="aa-tRNA-synth_I_codon-bd_sub2"/>
</dbReference>
<dbReference type="InterPro" id="IPR001412">
    <property type="entry name" value="aa-tRNA-synth_I_CS"/>
</dbReference>
<dbReference type="InterPro" id="IPR008925">
    <property type="entry name" value="aa_tRNA-synth_I_cd-bd_sf"/>
</dbReference>
<dbReference type="InterPro" id="IPR004527">
    <property type="entry name" value="Glu-tRNA-ligase_bac/mito"/>
</dbReference>
<dbReference type="InterPro" id="IPR000924">
    <property type="entry name" value="Glu/Gln-tRNA-synth"/>
</dbReference>
<dbReference type="InterPro" id="IPR020058">
    <property type="entry name" value="Glu/Gln-tRNA-synth_Ib_cat-dom"/>
</dbReference>
<dbReference type="InterPro" id="IPR049940">
    <property type="entry name" value="GluQ/Sye"/>
</dbReference>
<dbReference type="InterPro" id="IPR014729">
    <property type="entry name" value="Rossmann-like_a/b/a_fold"/>
</dbReference>
<dbReference type="NCBIfam" id="TIGR00464">
    <property type="entry name" value="gltX_bact"/>
    <property type="match status" value="1"/>
</dbReference>
<dbReference type="PANTHER" id="PTHR43311">
    <property type="entry name" value="GLUTAMATE--TRNA LIGASE"/>
    <property type="match status" value="1"/>
</dbReference>
<dbReference type="PANTHER" id="PTHR43311:SF2">
    <property type="entry name" value="GLUTAMATE--TRNA LIGASE, MITOCHONDRIAL-RELATED"/>
    <property type="match status" value="1"/>
</dbReference>
<dbReference type="Pfam" id="PF19269">
    <property type="entry name" value="Anticodon_2"/>
    <property type="match status" value="1"/>
</dbReference>
<dbReference type="Pfam" id="PF00749">
    <property type="entry name" value="tRNA-synt_1c"/>
    <property type="match status" value="1"/>
</dbReference>
<dbReference type="PRINTS" id="PR00987">
    <property type="entry name" value="TRNASYNTHGLU"/>
</dbReference>
<dbReference type="SUPFAM" id="SSF48163">
    <property type="entry name" value="An anticodon-binding domain of class I aminoacyl-tRNA synthetases"/>
    <property type="match status" value="1"/>
</dbReference>
<dbReference type="SUPFAM" id="SSF52374">
    <property type="entry name" value="Nucleotidylyl transferase"/>
    <property type="match status" value="1"/>
</dbReference>
<dbReference type="PROSITE" id="PS00178">
    <property type="entry name" value="AA_TRNA_LIGASE_I"/>
    <property type="match status" value="1"/>
</dbReference>
<accession>A9ISS8</accession>
<reference key="1">
    <citation type="journal article" date="2007" name="Nat. Genet.">
        <title>Genomic analysis of Bartonella identifies type IV secretion systems as host adaptability factors.</title>
        <authorList>
            <person name="Saenz H.L."/>
            <person name="Engel P."/>
            <person name="Stoeckli M.C."/>
            <person name="Lanz C."/>
            <person name="Raddatz G."/>
            <person name="Vayssier-Taussat M."/>
            <person name="Birtles R."/>
            <person name="Schuster S.C."/>
            <person name="Dehio C."/>
        </authorList>
    </citation>
    <scope>NUCLEOTIDE SEQUENCE [LARGE SCALE GENOMIC DNA]</scope>
    <source>
        <strain>CIP 105476 / IBS 506</strain>
    </source>
</reference>
<keyword id="KW-0030">Aminoacyl-tRNA synthetase</keyword>
<keyword id="KW-0067">ATP-binding</keyword>
<keyword id="KW-0963">Cytoplasm</keyword>
<keyword id="KW-0436">Ligase</keyword>
<keyword id="KW-0547">Nucleotide-binding</keyword>
<keyword id="KW-0648">Protein biosynthesis</keyword>
<protein>
    <recommendedName>
        <fullName evidence="1">Glutamate--tRNA ligase 2</fullName>
        <ecNumber evidence="1">6.1.1.17</ecNumber>
    </recommendedName>
    <alternativeName>
        <fullName evidence="1">Glutamyl-tRNA synthetase 2</fullName>
        <shortName evidence="1">GluRS 2</shortName>
    </alternativeName>
</protein>
<organism>
    <name type="scientific">Bartonella tribocorum (strain CIP 105476 / IBS 506)</name>
    <dbReference type="NCBI Taxonomy" id="382640"/>
    <lineage>
        <taxon>Bacteria</taxon>
        <taxon>Pseudomonadati</taxon>
        <taxon>Pseudomonadota</taxon>
        <taxon>Alphaproteobacteria</taxon>
        <taxon>Hyphomicrobiales</taxon>
        <taxon>Bartonellaceae</taxon>
        <taxon>Bartonella</taxon>
    </lineage>
</organism>
<feature type="chain" id="PRO_0000367613" description="Glutamate--tRNA ligase 2">
    <location>
        <begin position="1"/>
        <end position="457"/>
    </location>
</feature>
<feature type="short sequence motif" description="'HIGH' region" evidence="1">
    <location>
        <begin position="8"/>
        <end position="18"/>
    </location>
</feature>
<feature type="short sequence motif" description="'KMSKS' region" evidence="1">
    <location>
        <begin position="249"/>
        <end position="253"/>
    </location>
</feature>
<feature type="binding site" evidence="1">
    <location>
        <position position="252"/>
    </location>
    <ligand>
        <name>ATP</name>
        <dbReference type="ChEBI" id="CHEBI:30616"/>
    </ligand>
</feature>
<gene>
    <name evidence="1" type="primary">gltX2</name>
    <name type="ordered locus">BT_0938</name>
</gene>
<evidence type="ECO:0000255" key="1">
    <source>
        <dbReference type="HAMAP-Rule" id="MF_00022"/>
    </source>
</evidence>
<comment type="function">
    <text evidence="1">Catalyzes the attachment of glutamate to tRNA(Glu) in a two-step reaction: glutamate is first activated by ATP to form Glu-AMP and then transferred to the acceptor end of tRNA(Glu).</text>
</comment>
<comment type="catalytic activity">
    <reaction evidence="1">
        <text>tRNA(Glu) + L-glutamate + ATP = L-glutamyl-tRNA(Glu) + AMP + diphosphate</text>
        <dbReference type="Rhea" id="RHEA:23540"/>
        <dbReference type="Rhea" id="RHEA-COMP:9663"/>
        <dbReference type="Rhea" id="RHEA-COMP:9680"/>
        <dbReference type="ChEBI" id="CHEBI:29985"/>
        <dbReference type="ChEBI" id="CHEBI:30616"/>
        <dbReference type="ChEBI" id="CHEBI:33019"/>
        <dbReference type="ChEBI" id="CHEBI:78442"/>
        <dbReference type="ChEBI" id="CHEBI:78520"/>
        <dbReference type="ChEBI" id="CHEBI:456215"/>
        <dbReference type="EC" id="6.1.1.17"/>
    </reaction>
</comment>
<comment type="subunit">
    <text evidence="1">Monomer.</text>
</comment>
<comment type="subcellular location">
    <subcellularLocation>
        <location evidence="1">Cytoplasm</location>
    </subcellularLocation>
</comment>
<comment type="similarity">
    <text evidence="1">Belongs to the class-I aminoacyl-tRNA synthetase family. Glutamate--tRNA ligase type 1 subfamily.</text>
</comment>
<proteinExistence type="inferred from homology"/>
<sequence>MVKVRFAPSPTGYIHIGNIRSALFNWLYAQAHKGEFILRYDDTDVERSKQEYIDAIAVDLEWLGIQPDAIYYQSKRFNRYDEVAEILKQRGLLYPCYETAEELERRRKIQLSRKLPPIYDRAALKLTAEEKKNCESQGRKPHWRFLLPNFENDPLQTKRTEVCWNDAVKGKQTIDLASLSDPVLIREDETYLYTLPSVVDDVDMAITHIIRGDDHITNTGVQIALFKALDAELPVFGHTNLLATVLGKGFSKRNNDLSIRSLREEGFESIAVQCLAVLIGTSQNVHPYPHQAALLEHFNLQDTSKSVAKFDIADLCTLNSHLVHELNYEDVKTRLKNLSIEGEKAEYFWNAIRSNIDKVNEAVLWWKIIHDEQNFDAVAQEDRAFVQQSLNFLPEGVLKDESWQVWTTALKEKTGRKGKSLFMPLRQALTGMDHGPEMGKLLQLLGREKVIERLSRK</sequence>